<protein>
    <recommendedName>
        <fullName evidence="1">Rhamnulose-1-phosphate aldolase</fullName>
        <ecNumber evidence="1">4.1.2.19</ecNumber>
    </recommendedName>
</protein>
<gene>
    <name evidence="1" type="primary">rhaD</name>
    <name type="ordered locus">EFER_3869</name>
</gene>
<keyword id="KW-0963">Cytoplasm</keyword>
<keyword id="KW-0456">Lyase</keyword>
<keyword id="KW-0479">Metal-binding</keyword>
<keyword id="KW-0684">Rhamnose metabolism</keyword>
<keyword id="KW-0862">Zinc</keyword>
<dbReference type="EC" id="4.1.2.19" evidence="1"/>
<dbReference type="EMBL" id="CU928158">
    <property type="protein sequence ID" value="CAQ91304.1"/>
    <property type="molecule type" value="Genomic_DNA"/>
</dbReference>
<dbReference type="RefSeq" id="WP_001179731.1">
    <property type="nucleotide sequence ID" value="NC_011740.1"/>
</dbReference>
<dbReference type="SMR" id="B7LVE1"/>
<dbReference type="GeneID" id="75059463"/>
<dbReference type="KEGG" id="efe:EFER_3869"/>
<dbReference type="HOGENOM" id="CLU_076831_0_0_6"/>
<dbReference type="OrthoDB" id="9784634at2"/>
<dbReference type="UniPathway" id="UPA00541">
    <property type="reaction ID" value="UER00603"/>
</dbReference>
<dbReference type="Proteomes" id="UP000000745">
    <property type="component" value="Chromosome"/>
</dbReference>
<dbReference type="GO" id="GO:0005829">
    <property type="term" value="C:cytosol"/>
    <property type="evidence" value="ECO:0007669"/>
    <property type="project" value="TreeGrafter"/>
</dbReference>
<dbReference type="GO" id="GO:0046872">
    <property type="term" value="F:metal ion binding"/>
    <property type="evidence" value="ECO:0007669"/>
    <property type="project" value="UniProtKB-KW"/>
</dbReference>
<dbReference type="GO" id="GO:0008994">
    <property type="term" value="F:rhamnulose-1-phosphate aldolase activity"/>
    <property type="evidence" value="ECO:0007669"/>
    <property type="project" value="UniProtKB-UniRule"/>
</dbReference>
<dbReference type="GO" id="GO:0019323">
    <property type="term" value="P:pentose catabolic process"/>
    <property type="evidence" value="ECO:0007669"/>
    <property type="project" value="TreeGrafter"/>
</dbReference>
<dbReference type="GO" id="GO:0019301">
    <property type="term" value="P:rhamnose catabolic process"/>
    <property type="evidence" value="ECO:0007669"/>
    <property type="project" value="UniProtKB-UniRule"/>
</dbReference>
<dbReference type="CDD" id="cd00398">
    <property type="entry name" value="Aldolase_II"/>
    <property type="match status" value="1"/>
</dbReference>
<dbReference type="FunFam" id="3.40.225.10:FF:000006">
    <property type="entry name" value="Rhamnulose-1-phosphate aldolase"/>
    <property type="match status" value="1"/>
</dbReference>
<dbReference type="Gene3D" id="3.40.225.10">
    <property type="entry name" value="Class II aldolase/adducin N-terminal domain"/>
    <property type="match status" value="1"/>
</dbReference>
<dbReference type="HAMAP" id="MF_00770">
    <property type="entry name" value="RhaD"/>
    <property type="match status" value="1"/>
</dbReference>
<dbReference type="InterPro" id="IPR050197">
    <property type="entry name" value="Aldolase_class_II_sugar_metab"/>
</dbReference>
<dbReference type="InterPro" id="IPR001303">
    <property type="entry name" value="Aldolase_II/adducin_N"/>
</dbReference>
<dbReference type="InterPro" id="IPR036409">
    <property type="entry name" value="Aldolase_II/adducin_N_sf"/>
</dbReference>
<dbReference type="InterPro" id="IPR013447">
    <property type="entry name" value="Rhamnulose-1-P_Aldolase"/>
</dbReference>
<dbReference type="NCBIfam" id="NF002963">
    <property type="entry name" value="PRK03634.1"/>
    <property type="match status" value="1"/>
</dbReference>
<dbReference type="NCBIfam" id="TIGR02624">
    <property type="entry name" value="rhamnu_1P_ald"/>
    <property type="match status" value="1"/>
</dbReference>
<dbReference type="PANTHER" id="PTHR22789">
    <property type="entry name" value="FUCULOSE PHOSPHATE ALDOLASE"/>
    <property type="match status" value="1"/>
</dbReference>
<dbReference type="PANTHER" id="PTHR22789:SF16">
    <property type="entry name" value="RHAMNULOSE-1-PHOSPHATE ALDOLASE"/>
    <property type="match status" value="1"/>
</dbReference>
<dbReference type="Pfam" id="PF00596">
    <property type="entry name" value="Aldolase_II"/>
    <property type="match status" value="1"/>
</dbReference>
<dbReference type="SMART" id="SM01007">
    <property type="entry name" value="Aldolase_II"/>
    <property type="match status" value="1"/>
</dbReference>
<dbReference type="SUPFAM" id="SSF53639">
    <property type="entry name" value="AraD/HMP-PK domain-like"/>
    <property type="match status" value="1"/>
</dbReference>
<name>RHAD_ESCF3</name>
<reference key="1">
    <citation type="journal article" date="2009" name="PLoS Genet.">
        <title>Organised genome dynamics in the Escherichia coli species results in highly diverse adaptive paths.</title>
        <authorList>
            <person name="Touchon M."/>
            <person name="Hoede C."/>
            <person name="Tenaillon O."/>
            <person name="Barbe V."/>
            <person name="Baeriswyl S."/>
            <person name="Bidet P."/>
            <person name="Bingen E."/>
            <person name="Bonacorsi S."/>
            <person name="Bouchier C."/>
            <person name="Bouvet O."/>
            <person name="Calteau A."/>
            <person name="Chiapello H."/>
            <person name="Clermont O."/>
            <person name="Cruveiller S."/>
            <person name="Danchin A."/>
            <person name="Diard M."/>
            <person name="Dossat C."/>
            <person name="Karoui M.E."/>
            <person name="Frapy E."/>
            <person name="Garry L."/>
            <person name="Ghigo J.M."/>
            <person name="Gilles A.M."/>
            <person name="Johnson J."/>
            <person name="Le Bouguenec C."/>
            <person name="Lescat M."/>
            <person name="Mangenot S."/>
            <person name="Martinez-Jehanne V."/>
            <person name="Matic I."/>
            <person name="Nassif X."/>
            <person name="Oztas S."/>
            <person name="Petit M.A."/>
            <person name="Pichon C."/>
            <person name="Rouy Z."/>
            <person name="Ruf C.S."/>
            <person name="Schneider D."/>
            <person name="Tourret J."/>
            <person name="Vacherie B."/>
            <person name="Vallenet D."/>
            <person name="Medigue C."/>
            <person name="Rocha E.P.C."/>
            <person name="Denamur E."/>
        </authorList>
    </citation>
    <scope>NUCLEOTIDE SEQUENCE [LARGE SCALE GENOMIC DNA]</scope>
    <source>
        <strain>ATCC 35469 / DSM 13698 / BCRC 15582 / CCUG 18766 / IAM 14443 / JCM 21226 / LMG 7866 / NBRC 102419 / NCTC 12128 / CDC 0568-73</strain>
    </source>
</reference>
<feature type="chain" id="PRO_1000193729" description="Rhamnulose-1-phosphate aldolase">
    <location>
        <begin position="1"/>
        <end position="274"/>
    </location>
</feature>
<feature type="active site" evidence="1">
    <location>
        <position position="117"/>
    </location>
</feature>
<feature type="binding site" evidence="1">
    <location>
        <position position="141"/>
    </location>
    <ligand>
        <name>Zn(2+)</name>
        <dbReference type="ChEBI" id="CHEBI:29105"/>
    </ligand>
</feature>
<feature type="binding site" evidence="1">
    <location>
        <position position="143"/>
    </location>
    <ligand>
        <name>Zn(2+)</name>
        <dbReference type="ChEBI" id="CHEBI:29105"/>
    </ligand>
</feature>
<feature type="binding site" evidence="1">
    <location>
        <position position="212"/>
    </location>
    <ligand>
        <name>Zn(2+)</name>
        <dbReference type="ChEBI" id="CHEBI:29105"/>
    </ligand>
</feature>
<organism>
    <name type="scientific">Escherichia fergusonii (strain ATCC 35469 / DSM 13698 / CCUG 18766 / IAM 14443 / JCM 21226 / LMG 7866 / NBRC 102419 / NCTC 12128 / CDC 0568-73)</name>
    <dbReference type="NCBI Taxonomy" id="585054"/>
    <lineage>
        <taxon>Bacteria</taxon>
        <taxon>Pseudomonadati</taxon>
        <taxon>Pseudomonadota</taxon>
        <taxon>Gammaproteobacteria</taxon>
        <taxon>Enterobacterales</taxon>
        <taxon>Enterobacteriaceae</taxon>
        <taxon>Escherichia</taxon>
    </lineage>
</organism>
<accession>B7LVE1</accession>
<comment type="function">
    <text evidence="1">Catalyzes the reversible cleavage of L-rhamnulose-1-phosphate to dihydroxyacetone phosphate (DHAP) and L-lactaldehyde.</text>
</comment>
<comment type="catalytic activity">
    <reaction evidence="1">
        <text>L-rhamnulose 1-phosphate = (S)-lactaldehyde + dihydroxyacetone phosphate</text>
        <dbReference type="Rhea" id="RHEA:19689"/>
        <dbReference type="ChEBI" id="CHEBI:18041"/>
        <dbReference type="ChEBI" id="CHEBI:57642"/>
        <dbReference type="ChEBI" id="CHEBI:58313"/>
        <dbReference type="EC" id="4.1.2.19"/>
    </reaction>
</comment>
<comment type="cofactor">
    <cofactor evidence="1">
        <name>Zn(2+)</name>
        <dbReference type="ChEBI" id="CHEBI:29105"/>
    </cofactor>
    <text evidence="1">Binds 1 zinc ion per subunit.</text>
</comment>
<comment type="pathway">
    <text evidence="1">Carbohydrate degradation; L-rhamnose degradation; glycerone phosphate from L-rhamnose: step 3/3.</text>
</comment>
<comment type="subunit">
    <text evidence="1">Homotetramer.</text>
</comment>
<comment type="subcellular location">
    <subcellularLocation>
        <location evidence="1">Cytoplasm</location>
    </subcellularLocation>
</comment>
<comment type="similarity">
    <text evidence="1">Belongs to the aldolase class II family. RhaD subfamily.</text>
</comment>
<proteinExistence type="inferred from homology"/>
<sequence length="274" mass="30097">MQNITQSWFVQGMIKATTDAWLKGWDERNGGNLTLRLDDADIAPYHDNFHAQPRYIPLSQPMPLLANTPFIVTGSGKFFRNVQLDPAANLGVVKVDSDGAGYHILWGLTHEAVPTSELPAHFLSHCERIKATNGKDRVIMHCHATNLIALTYVLENDTAVFTRQLWEGSTECLVVFPDGVGILPWMVPGTDEIGQATAQEMQKHSLVLWPFHGVFGSGPTLDEAFGLIDTAEKSAEVLVKIYSMGGMKQTITREELIALGERFGVTPLASALAL</sequence>
<evidence type="ECO:0000255" key="1">
    <source>
        <dbReference type="HAMAP-Rule" id="MF_00770"/>
    </source>
</evidence>